<reference key="1">
    <citation type="journal article" date="2003" name="Proc. Natl. Acad. Sci. U.S.A.">
        <title>The complete genome sequence of Mycobacterium bovis.</title>
        <authorList>
            <person name="Garnier T."/>
            <person name="Eiglmeier K."/>
            <person name="Camus J.-C."/>
            <person name="Medina N."/>
            <person name="Mansoor H."/>
            <person name="Pryor M."/>
            <person name="Duthoy S."/>
            <person name="Grondin S."/>
            <person name="Lacroix C."/>
            <person name="Monsempe C."/>
            <person name="Simon S."/>
            <person name="Harris B."/>
            <person name="Atkin R."/>
            <person name="Doggett J."/>
            <person name="Mayes R."/>
            <person name="Keating L."/>
            <person name="Wheeler P.R."/>
            <person name="Parkhill J."/>
            <person name="Barrell B.G."/>
            <person name="Cole S.T."/>
            <person name="Gordon S.V."/>
            <person name="Hewinson R.G."/>
        </authorList>
    </citation>
    <scope>NUCLEOTIDE SEQUENCE [LARGE SCALE GENOMIC DNA]</scope>
    <source>
        <strain>ATCC BAA-935 / AF2122/97</strain>
    </source>
</reference>
<reference key="2">
    <citation type="journal article" date="2017" name="Genome Announc.">
        <title>Updated reference genome sequence and annotation of Mycobacterium bovis AF2122/97.</title>
        <authorList>
            <person name="Malone K.M."/>
            <person name="Farrell D."/>
            <person name="Stuber T.P."/>
            <person name="Schubert O.T."/>
            <person name="Aebersold R."/>
            <person name="Robbe-Austerman S."/>
            <person name="Gordon S.V."/>
        </authorList>
    </citation>
    <scope>NUCLEOTIDE SEQUENCE [LARGE SCALE GENOMIC DNA]</scope>
    <scope>GENOME REANNOTATION</scope>
    <source>
        <strain>ATCC BAA-935 / AF2122/97</strain>
    </source>
</reference>
<accession>Q7TXG2</accession>
<accession>A0A1R3Y2V8</accession>
<accession>X2BMB5</accession>
<sequence length="494" mass="51436">MTDIIRSDAATLAAKIAIKEVSSTEITRACLDQIEATDETYHAFLHVAADEALAAAAAVDKQVAAGEPLPSALAGVPLALKDVFTTSDMPTTCGSKILEGWRSPYDATLTARLRAAGIPILGKTNMDEFAMGSSTENSAYGPTRNPWNLDRVPGGSGGGSAAALAAFQAPLAIGSDTGGSIRQPAALTATVGVKPTYGTVSRYGLVACASSLDQGGPCARTVLDTALLHQVIAGHDPRDSTSVDAEVPDVVGAARAGAVGDLRGVRVGVVRQLHGGEGYQPGVLASFEAAVEQLTALGAEVSEVDCPHFDHALAAYYLILPSEVSSNLARFDAMRYGLRVGDDGTRSAEEVMAMTRAAGFGPEVKRRIMIGTYALSAGYYDAYYNQAQKVRTLIARDLDAAYRSVDVLVSPTTPTTAFRLGEKVDDPLAMYLFDLCTLPLNLAGHCGMSVPSGLSPDDGLPVGLQIMAPALADDRLYRVGAAYEAARGPLLSAI</sequence>
<keyword id="KW-0067">ATP-binding</keyword>
<keyword id="KW-0436">Ligase</keyword>
<keyword id="KW-0547">Nucleotide-binding</keyword>
<keyword id="KW-0648">Protein biosynthesis</keyword>
<keyword id="KW-1185">Reference proteome</keyword>
<gene>
    <name evidence="1" type="primary">gatA</name>
    <name type="ordered locus">BQ2027_MB3036C</name>
</gene>
<name>GATA_MYCBO</name>
<evidence type="ECO:0000255" key="1">
    <source>
        <dbReference type="HAMAP-Rule" id="MF_00120"/>
    </source>
</evidence>
<dbReference type="EC" id="6.3.5.7" evidence="1"/>
<dbReference type="EMBL" id="LT708304">
    <property type="protein sequence ID" value="SIU01660.1"/>
    <property type="molecule type" value="Genomic_DNA"/>
</dbReference>
<dbReference type="RefSeq" id="NP_856681.1">
    <property type="nucleotide sequence ID" value="NC_002945.3"/>
</dbReference>
<dbReference type="RefSeq" id="WP_010950812.1">
    <property type="nucleotide sequence ID" value="NC_002945.4"/>
</dbReference>
<dbReference type="SMR" id="Q7TXG2"/>
<dbReference type="KEGG" id="mbo:BQ2027_MB3036C"/>
<dbReference type="PATRIC" id="fig|233413.5.peg.3336"/>
<dbReference type="Proteomes" id="UP000001419">
    <property type="component" value="Chromosome"/>
</dbReference>
<dbReference type="GO" id="GO:0030956">
    <property type="term" value="C:glutamyl-tRNA(Gln) amidotransferase complex"/>
    <property type="evidence" value="ECO:0007669"/>
    <property type="project" value="InterPro"/>
</dbReference>
<dbReference type="GO" id="GO:0005524">
    <property type="term" value="F:ATP binding"/>
    <property type="evidence" value="ECO:0007669"/>
    <property type="project" value="UniProtKB-KW"/>
</dbReference>
<dbReference type="GO" id="GO:0050567">
    <property type="term" value="F:glutaminyl-tRNA synthase (glutamine-hydrolyzing) activity"/>
    <property type="evidence" value="ECO:0007669"/>
    <property type="project" value="UniProtKB-UniRule"/>
</dbReference>
<dbReference type="GO" id="GO:0006412">
    <property type="term" value="P:translation"/>
    <property type="evidence" value="ECO:0007669"/>
    <property type="project" value="UniProtKB-UniRule"/>
</dbReference>
<dbReference type="Gene3D" id="3.90.1300.10">
    <property type="entry name" value="Amidase signature (AS) domain"/>
    <property type="match status" value="1"/>
</dbReference>
<dbReference type="HAMAP" id="MF_00120">
    <property type="entry name" value="GatA"/>
    <property type="match status" value="1"/>
</dbReference>
<dbReference type="InterPro" id="IPR000120">
    <property type="entry name" value="Amidase"/>
</dbReference>
<dbReference type="InterPro" id="IPR020556">
    <property type="entry name" value="Amidase_CS"/>
</dbReference>
<dbReference type="InterPro" id="IPR023631">
    <property type="entry name" value="Amidase_dom"/>
</dbReference>
<dbReference type="InterPro" id="IPR036928">
    <property type="entry name" value="AS_sf"/>
</dbReference>
<dbReference type="InterPro" id="IPR004412">
    <property type="entry name" value="GatA"/>
</dbReference>
<dbReference type="NCBIfam" id="TIGR00132">
    <property type="entry name" value="gatA"/>
    <property type="match status" value="1"/>
</dbReference>
<dbReference type="PANTHER" id="PTHR11895:SF151">
    <property type="entry name" value="GLUTAMYL-TRNA(GLN) AMIDOTRANSFERASE SUBUNIT A"/>
    <property type="match status" value="1"/>
</dbReference>
<dbReference type="PANTHER" id="PTHR11895">
    <property type="entry name" value="TRANSAMIDASE"/>
    <property type="match status" value="1"/>
</dbReference>
<dbReference type="Pfam" id="PF01425">
    <property type="entry name" value="Amidase"/>
    <property type="match status" value="1"/>
</dbReference>
<dbReference type="SUPFAM" id="SSF75304">
    <property type="entry name" value="Amidase signature (AS) enzymes"/>
    <property type="match status" value="1"/>
</dbReference>
<dbReference type="PROSITE" id="PS00571">
    <property type="entry name" value="AMIDASES"/>
    <property type="match status" value="1"/>
</dbReference>
<protein>
    <recommendedName>
        <fullName evidence="1">Glutamyl-tRNA(Gln) amidotransferase subunit A</fullName>
        <shortName evidence="1">Glu-ADT subunit A</shortName>
        <ecNumber evidence="1">6.3.5.7</ecNumber>
    </recommendedName>
</protein>
<comment type="function">
    <text evidence="1">Allows the formation of correctly charged Gln-tRNA(Gln) through the transamidation of misacylated Glu-tRNA(Gln) in organisms which lack glutaminyl-tRNA synthetase. The reaction takes place in the presence of glutamine and ATP through an activated gamma-phospho-Glu-tRNA(Gln).</text>
</comment>
<comment type="catalytic activity">
    <reaction evidence="1">
        <text>L-glutamyl-tRNA(Gln) + L-glutamine + ATP + H2O = L-glutaminyl-tRNA(Gln) + L-glutamate + ADP + phosphate + H(+)</text>
        <dbReference type="Rhea" id="RHEA:17521"/>
        <dbReference type="Rhea" id="RHEA-COMP:9681"/>
        <dbReference type="Rhea" id="RHEA-COMP:9684"/>
        <dbReference type="ChEBI" id="CHEBI:15377"/>
        <dbReference type="ChEBI" id="CHEBI:15378"/>
        <dbReference type="ChEBI" id="CHEBI:29985"/>
        <dbReference type="ChEBI" id="CHEBI:30616"/>
        <dbReference type="ChEBI" id="CHEBI:43474"/>
        <dbReference type="ChEBI" id="CHEBI:58359"/>
        <dbReference type="ChEBI" id="CHEBI:78520"/>
        <dbReference type="ChEBI" id="CHEBI:78521"/>
        <dbReference type="ChEBI" id="CHEBI:456216"/>
        <dbReference type="EC" id="6.3.5.7"/>
    </reaction>
</comment>
<comment type="subunit">
    <text evidence="1">Heterotrimer of A, B and C subunits.</text>
</comment>
<comment type="similarity">
    <text evidence="1">Belongs to the amidase family. GatA subfamily.</text>
</comment>
<organism>
    <name type="scientific">Mycobacterium bovis (strain ATCC BAA-935 / AF2122/97)</name>
    <dbReference type="NCBI Taxonomy" id="233413"/>
    <lineage>
        <taxon>Bacteria</taxon>
        <taxon>Bacillati</taxon>
        <taxon>Actinomycetota</taxon>
        <taxon>Actinomycetes</taxon>
        <taxon>Mycobacteriales</taxon>
        <taxon>Mycobacteriaceae</taxon>
        <taxon>Mycobacterium</taxon>
        <taxon>Mycobacterium tuberculosis complex</taxon>
    </lineage>
</organism>
<feature type="chain" id="PRO_0000105177" description="Glutamyl-tRNA(Gln) amidotransferase subunit A">
    <location>
        <begin position="1"/>
        <end position="494"/>
    </location>
</feature>
<feature type="active site" description="Charge relay system" evidence="1">
    <location>
        <position position="81"/>
    </location>
</feature>
<feature type="active site" description="Charge relay system" evidence="1">
    <location>
        <position position="156"/>
    </location>
</feature>
<feature type="active site" description="Acyl-ester intermediate" evidence="1">
    <location>
        <position position="180"/>
    </location>
</feature>
<proteinExistence type="inferred from homology"/>